<organism>
    <name type="scientific">Pseudomonas syringae pv. tomato (strain ATCC BAA-871 / DC3000)</name>
    <dbReference type="NCBI Taxonomy" id="223283"/>
    <lineage>
        <taxon>Bacteria</taxon>
        <taxon>Pseudomonadati</taxon>
        <taxon>Pseudomonadota</taxon>
        <taxon>Gammaproteobacteria</taxon>
        <taxon>Pseudomonadales</taxon>
        <taxon>Pseudomonadaceae</taxon>
        <taxon>Pseudomonas</taxon>
    </lineage>
</organism>
<dbReference type="EC" id="2.1.3.3" evidence="2"/>
<dbReference type="EMBL" id="AE016853">
    <property type="protein sequence ID" value="AAO57620.1"/>
    <property type="molecule type" value="Genomic_DNA"/>
</dbReference>
<dbReference type="RefSeq" id="NP_793925.1">
    <property type="nucleotide sequence ID" value="NC_004578.1"/>
</dbReference>
<dbReference type="RefSeq" id="WP_011104892.1">
    <property type="nucleotide sequence ID" value="NC_004578.1"/>
</dbReference>
<dbReference type="SMR" id="Q87XL4"/>
<dbReference type="STRING" id="223283.PSPTO_4164"/>
<dbReference type="GeneID" id="1185844"/>
<dbReference type="KEGG" id="pst:PSPTO_4164"/>
<dbReference type="PATRIC" id="fig|223283.9.peg.4274"/>
<dbReference type="eggNOG" id="COG0078">
    <property type="taxonomic scope" value="Bacteria"/>
</dbReference>
<dbReference type="HOGENOM" id="CLU_043846_3_2_6"/>
<dbReference type="OrthoDB" id="9802587at2"/>
<dbReference type="PhylomeDB" id="Q87XL4"/>
<dbReference type="UniPathway" id="UPA00068">
    <property type="reaction ID" value="UER00112"/>
</dbReference>
<dbReference type="Proteomes" id="UP000002515">
    <property type="component" value="Chromosome"/>
</dbReference>
<dbReference type="GO" id="GO:0005737">
    <property type="term" value="C:cytoplasm"/>
    <property type="evidence" value="ECO:0007669"/>
    <property type="project" value="UniProtKB-SubCell"/>
</dbReference>
<dbReference type="GO" id="GO:0016597">
    <property type="term" value="F:amino acid binding"/>
    <property type="evidence" value="ECO:0007669"/>
    <property type="project" value="InterPro"/>
</dbReference>
<dbReference type="GO" id="GO:0004585">
    <property type="term" value="F:ornithine carbamoyltransferase activity"/>
    <property type="evidence" value="ECO:0007669"/>
    <property type="project" value="UniProtKB-UniRule"/>
</dbReference>
<dbReference type="GO" id="GO:0042450">
    <property type="term" value="P:arginine biosynthetic process via ornithine"/>
    <property type="evidence" value="ECO:0007669"/>
    <property type="project" value="TreeGrafter"/>
</dbReference>
<dbReference type="GO" id="GO:0019240">
    <property type="term" value="P:citrulline biosynthetic process"/>
    <property type="evidence" value="ECO:0007669"/>
    <property type="project" value="TreeGrafter"/>
</dbReference>
<dbReference type="GO" id="GO:0006526">
    <property type="term" value="P:L-arginine biosynthetic process"/>
    <property type="evidence" value="ECO:0007669"/>
    <property type="project" value="UniProtKB-UniRule"/>
</dbReference>
<dbReference type="FunFam" id="3.40.50.1370:FF:000008">
    <property type="entry name" value="Ornithine carbamoyltransferase"/>
    <property type="match status" value="1"/>
</dbReference>
<dbReference type="Gene3D" id="3.40.50.1370">
    <property type="entry name" value="Aspartate/ornithine carbamoyltransferase"/>
    <property type="match status" value="2"/>
</dbReference>
<dbReference type="HAMAP" id="MF_01109">
    <property type="entry name" value="OTCase"/>
    <property type="match status" value="1"/>
</dbReference>
<dbReference type="InterPro" id="IPR006132">
    <property type="entry name" value="Asp/Orn_carbamoyltranf_P-bd"/>
</dbReference>
<dbReference type="InterPro" id="IPR006130">
    <property type="entry name" value="Asp/Orn_carbamoylTrfase"/>
</dbReference>
<dbReference type="InterPro" id="IPR036901">
    <property type="entry name" value="Asp/Orn_carbamoylTrfase_sf"/>
</dbReference>
<dbReference type="InterPro" id="IPR006131">
    <property type="entry name" value="Asp_carbamoyltransf_Asp/Orn-bd"/>
</dbReference>
<dbReference type="InterPro" id="IPR002292">
    <property type="entry name" value="Orn/put_carbamltrans"/>
</dbReference>
<dbReference type="InterPro" id="IPR024904">
    <property type="entry name" value="OTCase_ArgI"/>
</dbReference>
<dbReference type="NCBIfam" id="TIGR00658">
    <property type="entry name" value="orni_carb_tr"/>
    <property type="match status" value="1"/>
</dbReference>
<dbReference type="NCBIfam" id="NF001986">
    <property type="entry name" value="PRK00779.1"/>
    <property type="match status" value="1"/>
</dbReference>
<dbReference type="PANTHER" id="PTHR45753">
    <property type="entry name" value="ORNITHINE CARBAMOYLTRANSFERASE, MITOCHONDRIAL"/>
    <property type="match status" value="1"/>
</dbReference>
<dbReference type="PANTHER" id="PTHR45753:SF3">
    <property type="entry name" value="ORNITHINE TRANSCARBAMYLASE, MITOCHONDRIAL"/>
    <property type="match status" value="1"/>
</dbReference>
<dbReference type="Pfam" id="PF00185">
    <property type="entry name" value="OTCace"/>
    <property type="match status" value="1"/>
</dbReference>
<dbReference type="Pfam" id="PF02729">
    <property type="entry name" value="OTCace_N"/>
    <property type="match status" value="1"/>
</dbReference>
<dbReference type="PRINTS" id="PR00100">
    <property type="entry name" value="AOTCASE"/>
</dbReference>
<dbReference type="PRINTS" id="PR00102">
    <property type="entry name" value="OTCASE"/>
</dbReference>
<dbReference type="SUPFAM" id="SSF53671">
    <property type="entry name" value="Aspartate/ornithine carbamoyltransferase"/>
    <property type="match status" value="1"/>
</dbReference>
<dbReference type="PROSITE" id="PS00097">
    <property type="entry name" value="CARBAMOYLTRANSFERASE"/>
    <property type="match status" value="1"/>
</dbReference>
<feature type="initiator methionine" description="Removed" evidence="1">
    <location>
        <position position="1"/>
    </location>
</feature>
<feature type="chain" id="PRO_0000112994" description="Ornithine carbamoyltransferase">
    <location>
        <begin position="2"/>
        <end position="306"/>
    </location>
</feature>
<feature type="binding site" evidence="2">
    <location>
        <begin position="53"/>
        <end position="56"/>
    </location>
    <ligand>
        <name>carbamoyl phosphate</name>
        <dbReference type="ChEBI" id="CHEBI:58228"/>
    </ligand>
</feature>
<feature type="binding site" evidence="2">
    <location>
        <position position="80"/>
    </location>
    <ligand>
        <name>carbamoyl phosphate</name>
        <dbReference type="ChEBI" id="CHEBI:58228"/>
    </ligand>
</feature>
<feature type="binding site" evidence="2">
    <location>
        <position position="104"/>
    </location>
    <ligand>
        <name>carbamoyl phosphate</name>
        <dbReference type="ChEBI" id="CHEBI:58228"/>
    </ligand>
</feature>
<feature type="binding site" evidence="2">
    <location>
        <begin position="131"/>
        <end position="134"/>
    </location>
    <ligand>
        <name>carbamoyl phosphate</name>
        <dbReference type="ChEBI" id="CHEBI:58228"/>
    </ligand>
</feature>
<feature type="binding site" evidence="2">
    <location>
        <position position="162"/>
    </location>
    <ligand>
        <name>L-ornithine</name>
        <dbReference type="ChEBI" id="CHEBI:46911"/>
    </ligand>
</feature>
<feature type="binding site" evidence="2">
    <location>
        <position position="219"/>
    </location>
    <ligand>
        <name>L-ornithine</name>
        <dbReference type="ChEBI" id="CHEBI:46911"/>
    </ligand>
</feature>
<feature type="binding site" evidence="2">
    <location>
        <begin position="223"/>
        <end position="224"/>
    </location>
    <ligand>
        <name>L-ornithine</name>
        <dbReference type="ChEBI" id="CHEBI:46911"/>
    </ligand>
</feature>
<feature type="binding site" evidence="2">
    <location>
        <begin position="259"/>
        <end position="260"/>
    </location>
    <ligand>
        <name>carbamoyl phosphate</name>
        <dbReference type="ChEBI" id="CHEBI:58228"/>
    </ligand>
</feature>
<feature type="binding site" evidence="2">
    <location>
        <position position="287"/>
    </location>
    <ligand>
        <name>carbamoyl phosphate</name>
        <dbReference type="ChEBI" id="CHEBI:58228"/>
    </ligand>
</feature>
<proteinExistence type="inferred from homology"/>
<evidence type="ECO:0000250" key="1"/>
<evidence type="ECO:0000255" key="2">
    <source>
        <dbReference type="HAMAP-Rule" id="MF_01109"/>
    </source>
</evidence>
<keyword id="KW-0028">Amino-acid biosynthesis</keyword>
<keyword id="KW-0055">Arginine biosynthesis</keyword>
<keyword id="KW-0963">Cytoplasm</keyword>
<keyword id="KW-1185">Reference proteome</keyword>
<keyword id="KW-0808">Transferase</keyword>
<accession>Q87XL4</accession>
<sequence>MNARHFLSMMDYTPDELLGLIRRGVELKDLRNRGVLFEPLKNRVLGMIFEKSSTRTRLSFEAGMIQLGGQAIFLSHRDTQLGRGEPIADSAKVISRMLDAVMIRTYAHDNLTEFAANSRVPVINGLSDDLHPCQLLADMQTFLEHRGSIKGKTVAWIGDGNNMCNSYIEAAIQFDFQLRVACPAGYEPNPEFLALAGERVTVVRDPKAAVAGAHLVSTDVWTSMGQEEETARRKALFAPFQVTRALLDLADKDVLFMHCLPAHRGEEISVDLLDDARSVAWDQAENRLHAQKALLEFLVAPCFQPA</sequence>
<reference key="1">
    <citation type="journal article" date="2003" name="Proc. Natl. Acad. Sci. U.S.A.">
        <title>The complete genome sequence of the Arabidopsis and tomato pathogen Pseudomonas syringae pv. tomato DC3000.</title>
        <authorList>
            <person name="Buell C.R."/>
            <person name="Joardar V."/>
            <person name="Lindeberg M."/>
            <person name="Selengut J."/>
            <person name="Paulsen I.T."/>
            <person name="Gwinn M.L."/>
            <person name="Dodson R.J."/>
            <person name="DeBoy R.T."/>
            <person name="Durkin A.S."/>
            <person name="Kolonay J.F."/>
            <person name="Madupu R."/>
            <person name="Daugherty S.C."/>
            <person name="Brinkac L.M."/>
            <person name="Beanan M.J."/>
            <person name="Haft D.H."/>
            <person name="Nelson W.C."/>
            <person name="Davidsen T.M."/>
            <person name="Zafar N."/>
            <person name="Zhou L."/>
            <person name="Liu J."/>
            <person name="Yuan Q."/>
            <person name="Khouri H.M."/>
            <person name="Fedorova N.B."/>
            <person name="Tran B."/>
            <person name="Russell D."/>
            <person name="Berry K.J."/>
            <person name="Utterback T.R."/>
            <person name="Van Aken S.E."/>
            <person name="Feldblyum T.V."/>
            <person name="D'Ascenzo M."/>
            <person name="Deng W.-L."/>
            <person name="Ramos A.R."/>
            <person name="Alfano J.R."/>
            <person name="Cartinhour S."/>
            <person name="Chatterjee A.K."/>
            <person name="Delaney T.P."/>
            <person name="Lazarowitz S.G."/>
            <person name="Martin G.B."/>
            <person name="Schneider D.J."/>
            <person name="Tang X."/>
            <person name="Bender C.L."/>
            <person name="White O."/>
            <person name="Fraser C.M."/>
            <person name="Collmer A."/>
        </authorList>
    </citation>
    <scope>NUCLEOTIDE SEQUENCE [LARGE SCALE GENOMIC DNA]</scope>
    <source>
        <strain>ATCC BAA-871 / DC3000</strain>
    </source>
</reference>
<gene>
    <name evidence="2" type="primary">argF</name>
    <name type="ordered locus">PSPTO_4164</name>
</gene>
<protein>
    <recommendedName>
        <fullName evidence="2">Ornithine carbamoyltransferase</fullName>
        <shortName evidence="2">OTCase</shortName>
        <ecNumber evidence="2">2.1.3.3</ecNumber>
    </recommendedName>
</protein>
<comment type="function">
    <text evidence="1">Reversibly catalyzes the transfer of the carbamoyl group from carbamoyl phosphate (CP) to the N(epsilon) atom of ornithine (ORN) to produce L-citrulline.</text>
</comment>
<comment type="catalytic activity">
    <reaction evidence="2">
        <text>carbamoyl phosphate + L-ornithine = L-citrulline + phosphate + H(+)</text>
        <dbReference type="Rhea" id="RHEA:19513"/>
        <dbReference type="ChEBI" id="CHEBI:15378"/>
        <dbReference type="ChEBI" id="CHEBI:43474"/>
        <dbReference type="ChEBI" id="CHEBI:46911"/>
        <dbReference type="ChEBI" id="CHEBI:57743"/>
        <dbReference type="ChEBI" id="CHEBI:58228"/>
        <dbReference type="EC" id="2.1.3.3"/>
    </reaction>
</comment>
<comment type="pathway">
    <text evidence="2">Amino-acid biosynthesis; L-arginine biosynthesis; L-arginine from L-ornithine and carbamoyl phosphate: step 1/3.</text>
</comment>
<comment type="subcellular location">
    <subcellularLocation>
        <location evidence="2">Cytoplasm</location>
    </subcellularLocation>
</comment>
<comment type="similarity">
    <text evidence="2">Belongs to the aspartate/ornithine carbamoyltransferase superfamily. OTCase family.</text>
</comment>
<name>OTC_PSESM</name>